<comment type="function">
    <text evidence="1">Catalyzes the condensation of ATP and 5-phosphoribose 1-diphosphate to form N'-(5'-phosphoribosyl)-ATP (PR-ATP). Has a crucial role in the pathway because the rate of histidine biosynthesis seems to be controlled primarily by regulation of HisG enzymatic activity.</text>
</comment>
<comment type="catalytic activity">
    <reaction evidence="1">
        <text>1-(5-phospho-beta-D-ribosyl)-ATP + diphosphate = 5-phospho-alpha-D-ribose 1-diphosphate + ATP</text>
        <dbReference type="Rhea" id="RHEA:18473"/>
        <dbReference type="ChEBI" id="CHEBI:30616"/>
        <dbReference type="ChEBI" id="CHEBI:33019"/>
        <dbReference type="ChEBI" id="CHEBI:58017"/>
        <dbReference type="ChEBI" id="CHEBI:73183"/>
        <dbReference type="EC" id="2.4.2.17"/>
    </reaction>
</comment>
<comment type="cofactor">
    <cofactor evidence="1">
        <name>Mg(2+)</name>
        <dbReference type="ChEBI" id="CHEBI:18420"/>
    </cofactor>
</comment>
<comment type="activity regulation">
    <text evidence="1">Feedback inhibited by histidine.</text>
</comment>
<comment type="pathway">
    <text evidence="1">Amino-acid biosynthesis; L-histidine biosynthesis; L-histidine from 5-phospho-alpha-D-ribose 1-diphosphate: step 1/9.</text>
</comment>
<comment type="subcellular location">
    <subcellularLocation>
        <location evidence="1">Cytoplasm</location>
    </subcellularLocation>
</comment>
<comment type="similarity">
    <text evidence="1">Belongs to the ATP phosphoribosyltransferase family. Long subfamily.</text>
</comment>
<organism>
    <name type="scientific">Aeromonas hydrophila subsp. hydrophila (strain ATCC 7966 / DSM 30187 / BCRC 13018 / CCUG 14551 / JCM 1027 / KCTC 2358 / NCIMB 9240 / NCTC 8049)</name>
    <dbReference type="NCBI Taxonomy" id="380703"/>
    <lineage>
        <taxon>Bacteria</taxon>
        <taxon>Pseudomonadati</taxon>
        <taxon>Pseudomonadota</taxon>
        <taxon>Gammaproteobacteria</taxon>
        <taxon>Aeromonadales</taxon>
        <taxon>Aeromonadaceae</taxon>
        <taxon>Aeromonas</taxon>
    </lineage>
</organism>
<evidence type="ECO:0000255" key="1">
    <source>
        <dbReference type="HAMAP-Rule" id="MF_00079"/>
    </source>
</evidence>
<gene>
    <name evidence="1" type="primary">hisG</name>
    <name type="ordered locus">AHA_2196</name>
</gene>
<sequence length="298" mass="32605">METQRLRIAMQKSGRLSQDSQALFKSCGLKINLREQRLIAHVENMPIDILRVRDDDIPGLVMEGVVDLGIIGENVLEEVQLIRASQGQPFAVKTLKQLDFGGCRLSLAVPDDVTYTGPQSLAGKRIATSYPGLLKRFFDEKGLSFKSVMLGGSVEVAPRAGLADAICDLVSTGATLEANGLKEVEVIYRSKAVLVQAPNPLSDAKQKIIDTLLPRIQGMQQARESKYIMLHAPKDKLDAITDLLPGAERPTIMQLAGETNQVALHVVSSETLFWETMEQLKALGASSILVLPIEKMME</sequence>
<name>HIS1_AERHH</name>
<reference key="1">
    <citation type="journal article" date="2006" name="J. Bacteriol.">
        <title>Genome sequence of Aeromonas hydrophila ATCC 7966T: jack of all trades.</title>
        <authorList>
            <person name="Seshadri R."/>
            <person name="Joseph S.W."/>
            <person name="Chopra A.K."/>
            <person name="Sha J."/>
            <person name="Shaw J."/>
            <person name="Graf J."/>
            <person name="Haft D.H."/>
            <person name="Wu M."/>
            <person name="Ren Q."/>
            <person name="Rosovitz M.J."/>
            <person name="Madupu R."/>
            <person name="Tallon L."/>
            <person name="Kim M."/>
            <person name="Jin S."/>
            <person name="Vuong H."/>
            <person name="Stine O.C."/>
            <person name="Ali A."/>
            <person name="Horneman A.J."/>
            <person name="Heidelberg J.F."/>
        </authorList>
    </citation>
    <scope>NUCLEOTIDE SEQUENCE [LARGE SCALE GENOMIC DNA]</scope>
    <source>
        <strain>ATCC 7966 / DSM 30187 / BCRC 13018 / CCUG 14551 / JCM 1027 / KCTC 2358 / NCIMB 9240 / NCTC 8049</strain>
    </source>
</reference>
<protein>
    <recommendedName>
        <fullName evidence="1">ATP phosphoribosyltransferase</fullName>
        <shortName evidence="1">ATP-PRT</shortName>
        <shortName evidence="1">ATP-PRTase</shortName>
        <ecNumber evidence="1">2.4.2.17</ecNumber>
    </recommendedName>
</protein>
<accession>A0KKB9</accession>
<dbReference type="EC" id="2.4.2.17" evidence="1"/>
<dbReference type="EMBL" id="CP000462">
    <property type="protein sequence ID" value="ABK38675.1"/>
    <property type="molecule type" value="Genomic_DNA"/>
</dbReference>
<dbReference type="RefSeq" id="WP_011706053.1">
    <property type="nucleotide sequence ID" value="NC_008570.1"/>
</dbReference>
<dbReference type="RefSeq" id="YP_856720.1">
    <property type="nucleotide sequence ID" value="NC_008570.1"/>
</dbReference>
<dbReference type="SMR" id="A0KKB9"/>
<dbReference type="STRING" id="380703.AHA_2196"/>
<dbReference type="EnsemblBacteria" id="ABK38675">
    <property type="protein sequence ID" value="ABK38675"/>
    <property type="gene ID" value="AHA_2196"/>
</dbReference>
<dbReference type="GeneID" id="4489955"/>
<dbReference type="KEGG" id="aha:AHA_2196"/>
<dbReference type="PATRIC" id="fig|380703.7.peg.2199"/>
<dbReference type="eggNOG" id="COG0040">
    <property type="taxonomic scope" value="Bacteria"/>
</dbReference>
<dbReference type="HOGENOM" id="CLU_038115_1_0_6"/>
<dbReference type="OrthoDB" id="9801867at2"/>
<dbReference type="UniPathway" id="UPA00031">
    <property type="reaction ID" value="UER00006"/>
</dbReference>
<dbReference type="Proteomes" id="UP000000756">
    <property type="component" value="Chromosome"/>
</dbReference>
<dbReference type="GO" id="GO:0005737">
    <property type="term" value="C:cytoplasm"/>
    <property type="evidence" value="ECO:0007669"/>
    <property type="project" value="UniProtKB-SubCell"/>
</dbReference>
<dbReference type="GO" id="GO:0005524">
    <property type="term" value="F:ATP binding"/>
    <property type="evidence" value="ECO:0007669"/>
    <property type="project" value="UniProtKB-KW"/>
</dbReference>
<dbReference type="GO" id="GO:0003879">
    <property type="term" value="F:ATP phosphoribosyltransferase activity"/>
    <property type="evidence" value="ECO:0007669"/>
    <property type="project" value="UniProtKB-UniRule"/>
</dbReference>
<dbReference type="GO" id="GO:0000287">
    <property type="term" value="F:magnesium ion binding"/>
    <property type="evidence" value="ECO:0007669"/>
    <property type="project" value="UniProtKB-UniRule"/>
</dbReference>
<dbReference type="GO" id="GO:0000105">
    <property type="term" value="P:L-histidine biosynthetic process"/>
    <property type="evidence" value="ECO:0007669"/>
    <property type="project" value="UniProtKB-UniRule"/>
</dbReference>
<dbReference type="CDD" id="cd13592">
    <property type="entry name" value="PBP2_HisGL2"/>
    <property type="match status" value="1"/>
</dbReference>
<dbReference type="FunFam" id="3.30.70.120:FF:000002">
    <property type="entry name" value="ATP phosphoribosyltransferase"/>
    <property type="match status" value="1"/>
</dbReference>
<dbReference type="FunFam" id="3.40.190.10:FF:000008">
    <property type="entry name" value="ATP phosphoribosyltransferase"/>
    <property type="match status" value="1"/>
</dbReference>
<dbReference type="Gene3D" id="3.30.70.120">
    <property type="match status" value="1"/>
</dbReference>
<dbReference type="Gene3D" id="3.40.190.10">
    <property type="entry name" value="Periplasmic binding protein-like II"/>
    <property type="match status" value="2"/>
</dbReference>
<dbReference type="HAMAP" id="MF_00079">
    <property type="entry name" value="HisG_Long"/>
    <property type="match status" value="1"/>
</dbReference>
<dbReference type="InterPro" id="IPR020621">
    <property type="entry name" value="ATP-PRT_HisG_long"/>
</dbReference>
<dbReference type="InterPro" id="IPR013820">
    <property type="entry name" value="ATP_PRibTrfase_cat"/>
</dbReference>
<dbReference type="InterPro" id="IPR018198">
    <property type="entry name" value="ATP_PRibTrfase_CS"/>
</dbReference>
<dbReference type="InterPro" id="IPR001348">
    <property type="entry name" value="ATP_PRibTrfase_HisG"/>
</dbReference>
<dbReference type="InterPro" id="IPR013115">
    <property type="entry name" value="HisG_C"/>
</dbReference>
<dbReference type="InterPro" id="IPR011322">
    <property type="entry name" value="N-reg_PII-like_a/b"/>
</dbReference>
<dbReference type="InterPro" id="IPR015867">
    <property type="entry name" value="N-reg_PII/ATP_PRibTrfase_C"/>
</dbReference>
<dbReference type="NCBIfam" id="TIGR00070">
    <property type="entry name" value="hisG"/>
    <property type="match status" value="1"/>
</dbReference>
<dbReference type="NCBIfam" id="TIGR03455">
    <property type="entry name" value="HisG_C-term"/>
    <property type="match status" value="1"/>
</dbReference>
<dbReference type="PANTHER" id="PTHR21403:SF8">
    <property type="entry name" value="ATP PHOSPHORIBOSYLTRANSFERASE"/>
    <property type="match status" value="1"/>
</dbReference>
<dbReference type="PANTHER" id="PTHR21403">
    <property type="entry name" value="ATP PHOSPHORIBOSYLTRANSFERASE ATP-PRTASE"/>
    <property type="match status" value="1"/>
</dbReference>
<dbReference type="Pfam" id="PF01634">
    <property type="entry name" value="HisG"/>
    <property type="match status" value="1"/>
</dbReference>
<dbReference type="Pfam" id="PF08029">
    <property type="entry name" value="HisG_C"/>
    <property type="match status" value="1"/>
</dbReference>
<dbReference type="SUPFAM" id="SSF54913">
    <property type="entry name" value="GlnB-like"/>
    <property type="match status" value="1"/>
</dbReference>
<dbReference type="SUPFAM" id="SSF53850">
    <property type="entry name" value="Periplasmic binding protein-like II"/>
    <property type="match status" value="1"/>
</dbReference>
<dbReference type="PROSITE" id="PS01316">
    <property type="entry name" value="ATP_P_PHORIBOSYLTR"/>
    <property type="match status" value="1"/>
</dbReference>
<feature type="chain" id="PRO_1000004438" description="ATP phosphoribosyltransferase">
    <location>
        <begin position="1"/>
        <end position="298"/>
    </location>
</feature>
<keyword id="KW-0028">Amino-acid biosynthesis</keyword>
<keyword id="KW-0067">ATP-binding</keyword>
<keyword id="KW-0963">Cytoplasm</keyword>
<keyword id="KW-0328">Glycosyltransferase</keyword>
<keyword id="KW-0368">Histidine biosynthesis</keyword>
<keyword id="KW-0460">Magnesium</keyword>
<keyword id="KW-0479">Metal-binding</keyword>
<keyword id="KW-0547">Nucleotide-binding</keyword>
<keyword id="KW-1185">Reference proteome</keyword>
<keyword id="KW-0808">Transferase</keyword>
<proteinExistence type="inferred from homology"/>